<keyword id="KW-0963">Cytoplasm</keyword>
<keyword id="KW-0342">GTP-binding</keyword>
<keyword id="KW-0436">Ligase</keyword>
<keyword id="KW-0460">Magnesium</keyword>
<keyword id="KW-0479">Metal-binding</keyword>
<keyword id="KW-0547">Nucleotide-binding</keyword>
<keyword id="KW-0658">Purine biosynthesis</keyword>
<keyword id="KW-1185">Reference proteome</keyword>
<gene>
    <name type="ORF">AO090005001150</name>
</gene>
<evidence type="ECO:0000250" key="1"/>
<evidence type="ECO:0000255" key="2">
    <source>
        <dbReference type="HAMAP-Rule" id="MF_03125"/>
    </source>
</evidence>
<sequence>MGVSIVLGSQWGDEGKGKITDMLAQQATLCCRAAGGHNAGHTIVHGNKTYDFHILPSGLISPSCINLIGAGTVVHVPSFFKELASLEEKGLEGASKRIFISDRAHVCLQLHSVVDGLEEAKLGGRKVGTTGKGIGPCYSDKASRRGIRVGEILDEAVFERKLRSLDAGYRARFGDLEYNVEEELAQFKEYRKLLGPYIVDQLAFLQKYKDSPNTLVEGANALMLDLDHGTYPYVTSSSTGLGGAMQALSLNPTSIKSVIGVVKAYTTRVGSGPFPSEQFNADGDKLQSVGREFGVTTGRRRRCGWLDLVVCRYSQAINHYTALNLTKLDVLDDFDEIKVGVAYILPDGTRTENTIPADAEVLEKVKVEYVTLPGWKSNTMGVKKYEDLPDNARAYIEYIERELGGVPVKWIGTGPARDDMIARE</sequence>
<reference key="1">
    <citation type="journal article" date="2005" name="Nature">
        <title>Genome sequencing and analysis of Aspergillus oryzae.</title>
        <authorList>
            <person name="Machida M."/>
            <person name="Asai K."/>
            <person name="Sano M."/>
            <person name="Tanaka T."/>
            <person name="Kumagai T."/>
            <person name="Terai G."/>
            <person name="Kusumoto K."/>
            <person name="Arima T."/>
            <person name="Akita O."/>
            <person name="Kashiwagi Y."/>
            <person name="Abe K."/>
            <person name="Gomi K."/>
            <person name="Horiuchi H."/>
            <person name="Kitamoto K."/>
            <person name="Kobayashi T."/>
            <person name="Takeuchi M."/>
            <person name="Denning D.W."/>
            <person name="Galagan J.E."/>
            <person name="Nierman W.C."/>
            <person name="Yu J."/>
            <person name="Archer D.B."/>
            <person name="Bennett J.W."/>
            <person name="Bhatnagar D."/>
            <person name="Cleveland T.E."/>
            <person name="Fedorova N.D."/>
            <person name="Gotoh O."/>
            <person name="Horikawa H."/>
            <person name="Hosoyama A."/>
            <person name="Ichinomiya M."/>
            <person name="Igarashi R."/>
            <person name="Iwashita K."/>
            <person name="Juvvadi P.R."/>
            <person name="Kato M."/>
            <person name="Kato Y."/>
            <person name="Kin T."/>
            <person name="Kokubun A."/>
            <person name="Maeda H."/>
            <person name="Maeyama N."/>
            <person name="Maruyama J."/>
            <person name="Nagasaki H."/>
            <person name="Nakajima T."/>
            <person name="Oda K."/>
            <person name="Okada K."/>
            <person name="Paulsen I."/>
            <person name="Sakamoto K."/>
            <person name="Sawano T."/>
            <person name="Takahashi M."/>
            <person name="Takase K."/>
            <person name="Terabayashi Y."/>
            <person name="Wortman J.R."/>
            <person name="Yamada O."/>
            <person name="Yamagata Y."/>
            <person name="Anazawa H."/>
            <person name="Hata Y."/>
            <person name="Koide Y."/>
            <person name="Komori T."/>
            <person name="Koyama Y."/>
            <person name="Minetoki T."/>
            <person name="Suharnan S."/>
            <person name="Tanaka A."/>
            <person name="Isono K."/>
            <person name="Kuhara S."/>
            <person name="Ogasawara N."/>
            <person name="Kikuchi H."/>
        </authorList>
    </citation>
    <scope>NUCLEOTIDE SEQUENCE [LARGE SCALE GENOMIC DNA]</scope>
    <source>
        <strain>ATCC 42149 / RIB 40</strain>
    </source>
</reference>
<accession>Q2UQQ2</accession>
<protein>
    <recommendedName>
        <fullName evidence="2">Adenylosuccinate synthetase</fullName>
        <shortName evidence="2">AMPSase</shortName>
        <shortName evidence="2">AdSS</shortName>
        <ecNumber evidence="2">6.3.4.4</ecNumber>
    </recommendedName>
    <alternativeName>
        <fullName evidence="2">IMP--aspartate ligase</fullName>
    </alternativeName>
</protein>
<organism>
    <name type="scientific">Aspergillus oryzae (strain ATCC 42149 / RIB 40)</name>
    <name type="common">Yellow koji mold</name>
    <dbReference type="NCBI Taxonomy" id="510516"/>
    <lineage>
        <taxon>Eukaryota</taxon>
        <taxon>Fungi</taxon>
        <taxon>Dikarya</taxon>
        <taxon>Ascomycota</taxon>
        <taxon>Pezizomycotina</taxon>
        <taxon>Eurotiomycetes</taxon>
        <taxon>Eurotiomycetidae</taxon>
        <taxon>Eurotiales</taxon>
        <taxon>Aspergillaceae</taxon>
        <taxon>Aspergillus</taxon>
        <taxon>Aspergillus subgen. Circumdati</taxon>
    </lineage>
</organism>
<feature type="chain" id="PRO_0000399324" description="Adenylosuccinate synthetase">
    <location>
        <begin position="1"/>
        <end position="424"/>
    </location>
</feature>
<feature type="active site" description="Proton acceptor" evidence="2">
    <location>
        <position position="13"/>
    </location>
</feature>
<feature type="active site" description="Proton donor" evidence="2">
    <location>
        <position position="41"/>
    </location>
</feature>
<feature type="binding site" evidence="2">
    <location>
        <begin position="12"/>
        <end position="18"/>
    </location>
    <ligand>
        <name>GTP</name>
        <dbReference type="ChEBI" id="CHEBI:37565"/>
    </ligand>
</feature>
<feature type="binding site" description="in other chain" evidence="2">
    <location>
        <begin position="13"/>
        <end position="16"/>
    </location>
    <ligand>
        <name>IMP</name>
        <dbReference type="ChEBI" id="CHEBI:58053"/>
        <note>ligand shared between dimeric partners</note>
    </ligand>
</feature>
<feature type="binding site" evidence="2">
    <location>
        <position position="13"/>
    </location>
    <ligand>
        <name>Mg(2+)</name>
        <dbReference type="ChEBI" id="CHEBI:18420"/>
    </ligand>
</feature>
<feature type="binding site" description="in other chain" evidence="2">
    <location>
        <begin position="38"/>
        <end position="41"/>
    </location>
    <ligand>
        <name>IMP</name>
        <dbReference type="ChEBI" id="CHEBI:58053"/>
        <note>ligand shared between dimeric partners</note>
    </ligand>
</feature>
<feature type="binding site" evidence="2">
    <location>
        <begin position="40"/>
        <end position="42"/>
    </location>
    <ligand>
        <name>GTP</name>
        <dbReference type="ChEBI" id="CHEBI:37565"/>
    </ligand>
</feature>
<feature type="binding site" evidence="2">
    <location>
        <position position="40"/>
    </location>
    <ligand>
        <name>Mg(2+)</name>
        <dbReference type="ChEBI" id="CHEBI:18420"/>
    </ligand>
</feature>
<feature type="binding site" description="in other chain" evidence="2">
    <location>
        <position position="130"/>
    </location>
    <ligand>
        <name>IMP</name>
        <dbReference type="ChEBI" id="CHEBI:58053"/>
        <note>ligand shared between dimeric partners</note>
    </ligand>
</feature>
<feature type="binding site" evidence="2">
    <location>
        <position position="144"/>
    </location>
    <ligand>
        <name>IMP</name>
        <dbReference type="ChEBI" id="CHEBI:58053"/>
        <note>ligand shared between dimeric partners</note>
    </ligand>
</feature>
<feature type="binding site" description="in other chain" evidence="2">
    <location>
        <position position="220"/>
    </location>
    <ligand>
        <name>IMP</name>
        <dbReference type="ChEBI" id="CHEBI:58053"/>
        <note>ligand shared between dimeric partners</note>
    </ligand>
</feature>
<feature type="binding site" description="in other chain" evidence="2">
    <location>
        <position position="235"/>
    </location>
    <ligand>
        <name>IMP</name>
        <dbReference type="ChEBI" id="CHEBI:58053"/>
        <note>ligand shared between dimeric partners</note>
    </ligand>
</feature>
<feature type="binding site" evidence="2">
    <location>
        <begin position="295"/>
        <end position="301"/>
    </location>
    <ligand>
        <name>substrate</name>
    </ligand>
</feature>
<feature type="binding site" description="in other chain" evidence="2">
    <location>
        <position position="299"/>
    </location>
    <ligand>
        <name>IMP</name>
        <dbReference type="ChEBI" id="CHEBI:58053"/>
        <note>ligand shared between dimeric partners</note>
    </ligand>
</feature>
<feature type="binding site" evidence="2">
    <location>
        <position position="301"/>
    </location>
    <ligand>
        <name>GTP</name>
        <dbReference type="ChEBI" id="CHEBI:37565"/>
    </ligand>
</feature>
<feature type="binding site" evidence="2">
    <location>
        <begin position="327"/>
        <end position="329"/>
    </location>
    <ligand>
        <name>GTP</name>
        <dbReference type="ChEBI" id="CHEBI:37565"/>
    </ligand>
</feature>
<feature type="binding site" evidence="2">
    <location>
        <begin position="412"/>
        <end position="414"/>
    </location>
    <ligand>
        <name>GTP</name>
        <dbReference type="ChEBI" id="CHEBI:37565"/>
    </ligand>
</feature>
<comment type="function">
    <text evidence="1">Plays an important role in the de novo pathway and in the salvage pathway of purine nucleotide biosynthesis. Catalyzes the first committed step in the biosynthesis of AMP from IMP (By similarity).</text>
</comment>
<comment type="catalytic activity">
    <reaction evidence="2">
        <text>IMP + L-aspartate + GTP = N(6)-(1,2-dicarboxyethyl)-AMP + GDP + phosphate + 2 H(+)</text>
        <dbReference type="Rhea" id="RHEA:15753"/>
        <dbReference type="ChEBI" id="CHEBI:15378"/>
        <dbReference type="ChEBI" id="CHEBI:29991"/>
        <dbReference type="ChEBI" id="CHEBI:37565"/>
        <dbReference type="ChEBI" id="CHEBI:43474"/>
        <dbReference type="ChEBI" id="CHEBI:57567"/>
        <dbReference type="ChEBI" id="CHEBI:58053"/>
        <dbReference type="ChEBI" id="CHEBI:58189"/>
        <dbReference type="EC" id="6.3.4.4"/>
    </reaction>
</comment>
<comment type="cofactor">
    <cofactor evidence="2">
        <name>Mg(2+)</name>
        <dbReference type="ChEBI" id="CHEBI:18420"/>
    </cofactor>
    <text evidence="2">Binds 1 Mg(2+) ion per subunit.</text>
</comment>
<comment type="pathway">
    <text evidence="2">Purine metabolism; AMP biosynthesis via de novo pathway; AMP from IMP: step 1/2.</text>
</comment>
<comment type="subunit">
    <text evidence="2">Homodimer.</text>
</comment>
<comment type="subcellular location">
    <subcellularLocation>
        <location evidence="2">Cytoplasm</location>
    </subcellularLocation>
</comment>
<comment type="similarity">
    <text evidence="2">Belongs to the adenylosuccinate synthetase family.</text>
</comment>
<dbReference type="EC" id="6.3.4.4" evidence="2"/>
<dbReference type="EMBL" id="BA000049">
    <property type="protein sequence ID" value="BAE56113.1"/>
    <property type="molecule type" value="Genomic_DNA"/>
</dbReference>
<dbReference type="RefSeq" id="XP_001818115.1">
    <property type="nucleotide sequence ID" value="XM_001818063.3"/>
</dbReference>
<dbReference type="SMR" id="Q2UQQ2"/>
<dbReference type="STRING" id="510516.Q2UQQ2"/>
<dbReference type="EnsemblFungi" id="BAE56113">
    <property type="protein sequence ID" value="BAE56113"/>
    <property type="gene ID" value="AO090005001150"/>
</dbReference>
<dbReference type="GeneID" id="5990060"/>
<dbReference type="KEGG" id="aor:AO090005001150"/>
<dbReference type="VEuPathDB" id="FungiDB:AO090005001150"/>
<dbReference type="HOGENOM" id="CLU_029848_3_2_1"/>
<dbReference type="OMA" id="FHHAKPI"/>
<dbReference type="OrthoDB" id="4122at5052"/>
<dbReference type="UniPathway" id="UPA00075">
    <property type="reaction ID" value="UER00335"/>
</dbReference>
<dbReference type="Proteomes" id="UP000006564">
    <property type="component" value="Chromosome 1"/>
</dbReference>
<dbReference type="GO" id="GO:0005737">
    <property type="term" value="C:cytoplasm"/>
    <property type="evidence" value="ECO:0007669"/>
    <property type="project" value="UniProtKB-SubCell"/>
</dbReference>
<dbReference type="GO" id="GO:0004019">
    <property type="term" value="F:adenylosuccinate synthase activity"/>
    <property type="evidence" value="ECO:0007669"/>
    <property type="project" value="UniProtKB-UniRule"/>
</dbReference>
<dbReference type="GO" id="GO:0016208">
    <property type="term" value="F:AMP binding"/>
    <property type="evidence" value="ECO:0007669"/>
    <property type="project" value="EnsemblFungi"/>
</dbReference>
<dbReference type="GO" id="GO:0019002">
    <property type="term" value="F:GMP binding"/>
    <property type="evidence" value="ECO:0007669"/>
    <property type="project" value="EnsemblFungi"/>
</dbReference>
<dbReference type="GO" id="GO:0005525">
    <property type="term" value="F:GTP binding"/>
    <property type="evidence" value="ECO:0007669"/>
    <property type="project" value="UniProtKB-UniRule"/>
</dbReference>
<dbReference type="GO" id="GO:0000287">
    <property type="term" value="F:magnesium ion binding"/>
    <property type="evidence" value="ECO:0007669"/>
    <property type="project" value="UniProtKB-UniRule"/>
</dbReference>
<dbReference type="GO" id="GO:0044208">
    <property type="term" value="P:'de novo' AMP biosynthetic process"/>
    <property type="evidence" value="ECO:0007669"/>
    <property type="project" value="UniProtKB-UniRule"/>
</dbReference>
<dbReference type="GO" id="GO:0071276">
    <property type="term" value="P:cellular response to cadmium ion"/>
    <property type="evidence" value="ECO:0007669"/>
    <property type="project" value="EnsemblFungi"/>
</dbReference>
<dbReference type="GO" id="GO:0046040">
    <property type="term" value="P:IMP metabolic process"/>
    <property type="evidence" value="ECO:0007669"/>
    <property type="project" value="TreeGrafter"/>
</dbReference>
<dbReference type="CDD" id="cd03108">
    <property type="entry name" value="AdSS"/>
    <property type="match status" value="1"/>
</dbReference>
<dbReference type="FunFam" id="1.10.300.10:FF:000001">
    <property type="entry name" value="Adenylosuccinate synthetase"/>
    <property type="match status" value="1"/>
</dbReference>
<dbReference type="FunFam" id="3.90.170.10:FF:000001">
    <property type="entry name" value="Adenylosuccinate synthetase"/>
    <property type="match status" value="1"/>
</dbReference>
<dbReference type="Gene3D" id="3.40.440.10">
    <property type="entry name" value="Adenylosuccinate Synthetase, subunit A, domain 1"/>
    <property type="match status" value="1"/>
</dbReference>
<dbReference type="Gene3D" id="1.10.300.10">
    <property type="entry name" value="Adenylosuccinate Synthetase, subunit A, domain 2"/>
    <property type="match status" value="1"/>
</dbReference>
<dbReference type="Gene3D" id="3.90.170.10">
    <property type="entry name" value="Adenylosuccinate Synthetase, subunit A, domain 3"/>
    <property type="match status" value="1"/>
</dbReference>
<dbReference type="HAMAP" id="MF_00011">
    <property type="entry name" value="Adenylosucc_synth"/>
    <property type="match status" value="1"/>
</dbReference>
<dbReference type="InterPro" id="IPR018220">
    <property type="entry name" value="Adenylosuccin_syn_GTP-bd"/>
</dbReference>
<dbReference type="InterPro" id="IPR033128">
    <property type="entry name" value="Adenylosuccin_syn_Lys_AS"/>
</dbReference>
<dbReference type="InterPro" id="IPR042109">
    <property type="entry name" value="Adenylosuccinate_synth_dom1"/>
</dbReference>
<dbReference type="InterPro" id="IPR042110">
    <property type="entry name" value="Adenylosuccinate_synth_dom2"/>
</dbReference>
<dbReference type="InterPro" id="IPR042111">
    <property type="entry name" value="Adenylosuccinate_synth_dom3"/>
</dbReference>
<dbReference type="InterPro" id="IPR001114">
    <property type="entry name" value="Adenylosuccinate_synthetase"/>
</dbReference>
<dbReference type="InterPro" id="IPR027417">
    <property type="entry name" value="P-loop_NTPase"/>
</dbReference>
<dbReference type="NCBIfam" id="NF002223">
    <property type="entry name" value="PRK01117.1"/>
    <property type="match status" value="1"/>
</dbReference>
<dbReference type="NCBIfam" id="TIGR00184">
    <property type="entry name" value="purA"/>
    <property type="match status" value="1"/>
</dbReference>
<dbReference type="PANTHER" id="PTHR11846">
    <property type="entry name" value="ADENYLOSUCCINATE SYNTHETASE"/>
    <property type="match status" value="1"/>
</dbReference>
<dbReference type="PANTHER" id="PTHR11846:SF0">
    <property type="entry name" value="ADENYLOSUCCINATE SYNTHETASE"/>
    <property type="match status" value="1"/>
</dbReference>
<dbReference type="Pfam" id="PF00709">
    <property type="entry name" value="Adenylsucc_synt"/>
    <property type="match status" value="1"/>
</dbReference>
<dbReference type="SMART" id="SM00788">
    <property type="entry name" value="Adenylsucc_synt"/>
    <property type="match status" value="1"/>
</dbReference>
<dbReference type="SUPFAM" id="SSF52540">
    <property type="entry name" value="P-loop containing nucleoside triphosphate hydrolases"/>
    <property type="match status" value="1"/>
</dbReference>
<dbReference type="PROSITE" id="PS01266">
    <property type="entry name" value="ADENYLOSUCCIN_SYN_1"/>
    <property type="match status" value="1"/>
</dbReference>
<dbReference type="PROSITE" id="PS00513">
    <property type="entry name" value="ADENYLOSUCCIN_SYN_2"/>
    <property type="match status" value="1"/>
</dbReference>
<proteinExistence type="inferred from homology"/>
<name>PURA_ASPOR</name>